<proteinExistence type="inferred from homology"/>
<evidence type="ECO:0000255" key="1">
    <source>
        <dbReference type="HAMAP-Rule" id="MF_00693"/>
    </source>
</evidence>
<comment type="subcellular location">
    <subcellularLocation>
        <location evidence="1">Cytoplasm</location>
    </subcellularLocation>
</comment>
<comment type="similarity">
    <text evidence="1">Belongs to the TACO1 family.</text>
</comment>
<feature type="chain" id="PRO_0000175919" description="Probable transcriptional regulatory protein TTHA0821">
    <location>
        <begin position="1"/>
        <end position="244"/>
    </location>
</feature>
<sequence>MAGHSKWAQIKRKKAANDLKRGKLISKHLRAIQAAARAGGSPYPEANVQLRNAIEAARADDVPMENIERLLQKLQGGGEGAEQYEEIVYEGYAPGGVALLVYALTDNRNRTASEVRHVFSKHGGSLGTTGSVAWQFERRGVVVCENTEAAQEAAIELGALDLEEEGENLTVYTEPTEAYRIAEALKAKGVRVEAVEVVQHPQNTVALPPEEAQKVMRLVEALEDLDDVQHVYTNLDPESLQVEA</sequence>
<gene>
    <name type="ordered locus">TTHA0821</name>
</gene>
<dbReference type="EMBL" id="AP008226">
    <property type="protein sequence ID" value="BAD70644.1"/>
    <property type="molecule type" value="Genomic_DNA"/>
</dbReference>
<dbReference type="RefSeq" id="WP_011172915.1">
    <property type="nucleotide sequence ID" value="NC_006461.1"/>
</dbReference>
<dbReference type="RefSeq" id="YP_144087.1">
    <property type="nucleotide sequence ID" value="NC_006461.1"/>
</dbReference>
<dbReference type="SMR" id="Q5SK31"/>
<dbReference type="EnsemblBacteria" id="BAD70644">
    <property type="protein sequence ID" value="BAD70644"/>
    <property type="gene ID" value="BAD70644"/>
</dbReference>
<dbReference type="GeneID" id="3170025"/>
<dbReference type="KEGG" id="ttj:TTHA0821"/>
<dbReference type="PATRIC" id="fig|300852.9.peg.815"/>
<dbReference type="eggNOG" id="COG0217">
    <property type="taxonomic scope" value="Bacteria"/>
</dbReference>
<dbReference type="HOGENOM" id="CLU_062974_2_2_0"/>
<dbReference type="PhylomeDB" id="Q5SK31"/>
<dbReference type="Proteomes" id="UP000000532">
    <property type="component" value="Chromosome"/>
</dbReference>
<dbReference type="GO" id="GO:0005829">
    <property type="term" value="C:cytosol"/>
    <property type="evidence" value="ECO:0007669"/>
    <property type="project" value="TreeGrafter"/>
</dbReference>
<dbReference type="GO" id="GO:0003677">
    <property type="term" value="F:DNA binding"/>
    <property type="evidence" value="ECO:0007669"/>
    <property type="project" value="UniProtKB-UniRule"/>
</dbReference>
<dbReference type="GO" id="GO:0006355">
    <property type="term" value="P:regulation of DNA-templated transcription"/>
    <property type="evidence" value="ECO:0007669"/>
    <property type="project" value="UniProtKB-UniRule"/>
</dbReference>
<dbReference type="FunFam" id="1.10.10.200:FF:000002">
    <property type="entry name" value="Probable transcriptional regulatory protein CLM62_37755"/>
    <property type="match status" value="1"/>
</dbReference>
<dbReference type="Gene3D" id="1.10.10.200">
    <property type="match status" value="1"/>
</dbReference>
<dbReference type="Gene3D" id="3.30.70.980">
    <property type="match status" value="2"/>
</dbReference>
<dbReference type="HAMAP" id="MF_00693">
    <property type="entry name" value="Transcrip_reg_TACO1"/>
    <property type="match status" value="1"/>
</dbReference>
<dbReference type="InterPro" id="IPR017856">
    <property type="entry name" value="Integrase-like_N"/>
</dbReference>
<dbReference type="InterPro" id="IPR048300">
    <property type="entry name" value="TACO1_YebC-like_2nd/3rd_dom"/>
</dbReference>
<dbReference type="InterPro" id="IPR049083">
    <property type="entry name" value="TACO1_YebC_N"/>
</dbReference>
<dbReference type="InterPro" id="IPR002876">
    <property type="entry name" value="Transcrip_reg_TACO1-like"/>
</dbReference>
<dbReference type="InterPro" id="IPR026564">
    <property type="entry name" value="Transcrip_reg_TACO1-like_dom3"/>
</dbReference>
<dbReference type="InterPro" id="IPR029072">
    <property type="entry name" value="YebC-like"/>
</dbReference>
<dbReference type="NCBIfam" id="NF001030">
    <property type="entry name" value="PRK00110.1"/>
    <property type="match status" value="1"/>
</dbReference>
<dbReference type="NCBIfam" id="NF009044">
    <property type="entry name" value="PRK12378.1"/>
    <property type="match status" value="1"/>
</dbReference>
<dbReference type="NCBIfam" id="TIGR01033">
    <property type="entry name" value="YebC/PmpR family DNA-binding transcriptional regulator"/>
    <property type="match status" value="1"/>
</dbReference>
<dbReference type="PANTHER" id="PTHR12532:SF6">
    <property type="entry name" value="TRANSCRIPTIONAL REGULATORY PROTEIN YEBC-RELATED"/>
    <property type="match status" value="1"/>
</dbReference>
<dbReference type="PANTHER" id="PTHR12532">
    <property type="entry name" value="TRANSLATIONAL ACTIVATOR OF CYTOCHROME C OXIDASE 1"/>
    <property type="match status" value="1"/>
</dbReference>
<dbReference type="Pfam" id="PF20772">
    <property type="entry name" value="TACO1_YebC_N"/>
    <property type="match status" value="1"/>
</dbReference>
<dbReference type="Pfam" id="PF01709">
    <property type="entry name" value="Transcrip_reg"/>
    <property type="match status" value="1"/>
</dbReference>
<dbReference type="SUPFAM" id="SSF75625">
    <property type="entry name" value="YebC-like"/>
    <property type="match status" value="1"/>
</dbReference>
<protein>
    <recommendedName>
        <fullName evidence="1">Probable transcriptional regulatory protein TTHA0821</fullName>
    </recommendedName>
</protein>
<reference key="1">
    <citation type="submission" date="2004-11" db="EMBL/GenBank/DDBJ databases">
        <title>Complete genome sequence of Thermus thermophilus HB8.</title>
        <authorList>
            <person name="Masui R."/>
            <person name="Kurokawa K."/>
            <person name="Nakagawa N."/>
            <person name="Tokunaga F."/>
            <person name="Koyama Y."/>
            <person name="Shibata T."/>
            <person name="Oshima T."/>
            <person name="Yokoyama S."/>
            <person name="Yasunaga T."/>
            <person name="Kuramitsu S."/>
        </authorList>
    </citation>
    <scope>NUCLEOTIDE SEQUENCE [LARGE SCALE GENOMIC DNA]</scope>
    <source>
        <strain>ATCC 27634 / DSM 579 / HB8</strain>
    </source>
</reference>
<accession>Q5SK31</accession>
<keyword id="KW-0963">Cytoplasm</keyword>
<keyword id="KW-0238">DNA-binding</keyword>
<keyword id="KW-1185">Reference proteome</keyword>
<keyword id="KW-0804">Transcription</keyword>
<keyword id="KW-0805">Transcription regulation</keyword>
<name>Y821_THET8</name>
<organism>
    <name type="scientific">Thermus thermophilus (strain ATCC 27634 / DSM 579 / HB8)</name>
    <dbReference type="NCBI Taxonomy" id="300852"/>
    <lineage>
        <taxon>Bacteria</taxon>
        <taxon>Thermotogati</taxon>
        <taxon>Deinococcota</taxon>
        <taxon>Deinococci</taxon>
        <taxon>Thermales</taxon>
        <taxon>Thermaceae</taxon>
        <taxon>Thermus</taxon>
    </lineage>
</organism>